<sequence>MIDRFGRPLEDLRITLTHVCNFECFFCHMEGEEGDNYILSKEDILLVAKVAKNFGINSVKLTGGEPTLRRDLVEIVRGLKQLGYRDVSMTTNGFLLKDLAYKLKLAGLDRINVSLHAISRETFKKITGVDAFDRVIEGIKSAIDVGLVPVKLNFVVNRRNREEVFKFIELSQNLGVNEIHLIELHPVGLGKLAFKEHDDLREIEEYIEKISIKKQIRKKHFRPRYVLPSGLIVEVVKPYANPIFCAGCNRIRLSVDGKLKTCLYREDNVIDILDILKGEYSEDVKEELLGRAFMIAIAIREPNFKYKI</sequence>
<gene>
    <name evidence="1" type="primary">moaA</name>
    <name type="ordered locus">M164_1788</name>
</gene>
<accession>C4KIH7</accession>
<comment type="function">
    <text evidence="1">Catalyzes the cyclization of GTP to (8S)-3',8-cyclo-7,8-dihydroguanosine 5'-triphosphate.</text>
</comment>
<comment type="catalytic activity">
    <reaction evidence="1">
        <text>GTP + AH2 + S-adenosyl-L-methionine = (8S)-3',8-cyclo-7,8-dihydroguanosine 5'-triphosphate + 5'-deoxyadenosine + L-methionine + A + H(+)</text>
        <dbReference type="Rhea" id="RHEA:49576"/>
        <dbReference type="ChEBI" id="CHEBI:13193"/>
        <dbReference type="ChEBI" id="CHEBI:15378"/>
        <dbReference type="ChEBI" id="CHEBI:17319"/>
        <dbReference type="ChEBI" id="CHEBI:17499"/>
        <dbReference type="ChEBI" id="CHEBI:37565"/>
        <dbReference type="ChEBI" id="CHEBI:57844"/>
        <dbReference type="ChEBI" id="CHEBI:59789"/>
        <dbReference type="ChEBI" id="CHEBI:131766"/>
        <dbReference type="EC" id="4.1.99.22"/>
    </reaction>
</comment>
<comment type="cofactor">
    <cofactor evidence="1">
        <name>[4Fe-4S] cluster</name>
        <dbReference type="ChEBI" id="CHEBI:49883"/>
    </cofactor>
    <text evidence="1">Binds 2 [4Fe-4S] clusters. Binds 1 [4Fe-4S] cluster coordinated with 3 cysteines and an exchangeable S-adenosyl-L-methionine and 1 [4Fe-4S] cluster coordinated with 3 cysteines and the GTP-derived substrate.</text>
</comment>
<comment type="pathway">
    <text evidence="1">Cofactor biosynthesis; molybdopterin biosynthesis.</text>
</comment>
<comment type="similarity">
    <text evidence="1">Belongs to the radical SAM superfamily. MoaA family.</text>
</comment>
<dbReference type="EC" id="4.1.99.22" evidence="1"/>
<dbReference type="EMBL" id="CP001402">
    <property type="protein sequence ID" value="ACR42391.1"/>
    <property type="molecule type" value="Genomic_DNA"/>
</dbReference>
<dbReference type="RefSeq" id="WP_012711718.1">
    <property type="nucleotide sequence ID" value="NC_012726.1"/>
</dbReference>
<dbReference type="SMR" id="C4KIH7"/>
<dbReference type="GeneID" id="84062093"/>
<dbReference type="KEGG" id="sid:M164_1788"/>
<dbReference type="HOGENOM" id="CLU_009273_0_1_2"/>
<dbReference type="UniPathway" id="UPA00344"/>
<dbReference type="Proteomes" id="UP000001479">
    <property type="component" value="Chromosome"/>
</dbReference>
<dbReference type="GO" id="GO:0051539">
    <property type="term" value="F:4 iron, 4 sulfur cluster binding"/>
    <property type="evidence" value="ECO:0007669"/>
    <property type="project" value="UniProtKB-UniRule"/>
</dbReference>
<dbReference type="GO" id="GO:0061799">
    <property type="term" value="F:cyclic pyranopterin monophosphate synthase activity"/>
    <property type="evidence" value="ECO:0007669"/>
    <property type="project" value="TreeGrafter"/>
</dbReference>
<dbReference type="GO" id="GO:0061798">
    <property type="term" value="F:GTP 3',8'-cyclase activity"/>
    <property type="evidence" value="ECO:0007669"/>
    <property type="project" value="UniProtKB-UniRule"/>
</dbReference>
<dbReference type="GO" id="GO:0005525">
    <property type="term" value="F:GTP binding"/>
    <property type="evidence" value="ECO:0007669"/>
    <property type="project" value="UniProtKB-UniRule"/>
</dbReference>
<dbReference type="GO" id="GO:0046872">
    <property type="term" value="F:metal ion binding"/>
    <property type="evidence" value="ECO:0007669"/>
    <property type="project" value="UniProtKB-KW"/>
</dbReference>
<dbReference type="GO" id="GO:1904047">
    <property type="term" value="F:S-adenosyl-L-methionine binding"/>
    <property type="evidence" value="ECO:0007669"/>
    <property type="project" value="UniProtKB-UniRule"/>
</dbReference>
<dbReference type="GO" id="GO:0006777">
    <property type="term" value="P:Mo-molybdopterin cofactor biosynthetic process"/>
    <property type="evidence" value="ECO:0007669"/>
    <property type="project" value="UniProtKB-UniRule"/>
</dbReference>
<dbReference type="CDD" id="cd01335">
    <property type="entry name" value="Radical_SAM"/>
    <property type="match status" value="1"/>
</dbReference>
<dbReference type="CDD" id="cd21117">
    <property type="entry name" value="Twitch_MoaA"/>
    <property type="match status" value="1"/>
</dbReference>
<dbReference type="Gene3D" id="3.20.20.70">
    <property type="entry name" value="Aldolase class I"/>
    <property type="match status" value="1"/>
</dbReference>
<dbReference type="HAMAP" id="MF_01225_A">
    <property type="entry name" value="MoaA_A"/>
    <property type="match status" value="1"/>
</dbReference>
<dbReference type="InterPro" id="IPR013785">
    <property type="entry name" value="Aldolase_TIM"/>
</dbReference>
<dbReference type="InterPro" id="IPR006638">
    <property type="entry name" value="Elp3/MiaA/NifB-like_rSAM"/>
</dbReference>
<dbReference type="InterPro" id="IPR013485">
    <property type="entry name" value="MoaA_arc"/>
</dbReference>
<dbReference type="InterPro" id="IPR010505">
    <property type="entry name" value="MoaA_twitch"/>
</dbReference>
<dbReference type="InterPro" id="IPR050105">
    <property type="entry name" value="MoCo_biosynth_MoaA/MoaC"/>
</dbReference>
<dbReference type="InterPro" id="IPR007197">
    <property type="entry name" value="rSAM"/>
</dbReference>
<dbReference type="NCBIfam" id="TIGR02668">
    <property type="entry name" value="moaA_archaeal"/>
    <property type="match status" value="1"/>
</dbReference>
<dbReference type="NCBIfam" id="NF001199">
    <property type="entry name" value="PRK00164.2-1"/>
    <property type="match status" value="1"/>
</dbReference>
<dbReference type="PANTHER" id="PTHR22960:SF0">
    <property type="entry name" value="MOLYBDENUM COFACTOR BIOSYNTHESIS PROTEIN 1"/>
    <property type="match status" value="1"/>
</dbReference>
<dbReference type="PANTHER" id="PTHR22960">
    <property type="entry name" value="MOLYBDOPTERIN COFACTOR SYNTHESIS PROTEIN A"/>
    <property type="match status" value="1"/>
</dbReference>
<dbReference type="Pfam" id="PF06463">
    <property type="entry name" value="Mob_synth_C"/>
    <property type="match status" value="1"/>
</dbReference>
<dbReference type="Pfam" id="PF04055">
    <property type="entry name" value="Radical_SAM"/>
    <property type="match status" value="1"/>
</dbReference>
<dbReference type="SFLD" id="SFLDG01383">
    <property type="entry name" value="cyclic_pyranopterin_phosphate"/>
    <property type="match status" value="1"/>
</dbReference>
<dbReference type="SFLD" id="SFLDG01216">
    <property type="entry name" value="thioether_bond_formation_requi"/>
    <property type="match status" value="1"/>
</dbReference>
<dbReference type="SMART" id="SM00729">
    <property type="entry name" value="Elp3"/>
    <property type="match status" value="1"/>
</dbReference>
<dbReference type="SUPFAM" id="SSF102114">
    <property type="entry name" value="Radical SAM enzymes"/>
    <property type="match status" value="1"/>
</dbReference>
<dbReference type="PROSITE" id="PS51918">
    <property type="entry name" value="RADICAL_SAM"/>
    <property type="match status" value="1"/>
</dbReference>
<feature type="chain" id="PRO_1000214001" description="Probable GTP 3',8-cyclase">
    <location>
        <begin position="1"/>
        <end position="308"/>
    </location>
</feature>
<feature type="domain" description="Radical SAM core" evidence="2">
    <location>
        <begin position="4"/>
        <end position="224"/>
    </location>
</feature>
<feature type="binding site" evidence="1">
    <location>
        <position position="13"/>
    </location>
    <ligand>
        <name>GTP</name>
        <dbReference type="ChEBI" id="CHEBI:37565"/>
    </ligand>
</feature>
<feature type="binding site" evidence="1">
    <location>
        <position position="20"/>
    </location>
    <ligand>
        <name>[4Fe-4S] cluster</name>
        <dbReference type="ChEBI" id="CHEBI:49883"/>
        <label>1</label>
        <note>4Fe-4S-S-AdoMet</note>
    </ligand>
</feature>
<feature type="binding site" evidence="1">
    <location>
        <position position="24"/>
    </location>
    <ligand>
        <name>[4Fe-4S] cluster</name>
        <dbReference type="ChEBI" id="CHEBI:49883"/>
        <label>1</label>
        <note>4Fe-4S-S-AdoMet</note>
    </ligand>
</feature>
<feature type="binding site" evidence="1">
    <location>
        <position position="27"/>
    </location>
    <ligand>
        <name>[4Fe-4S] cluster</name>
        <dbReference type="ChEBI" id="CHEBI:49883"/>
        <label>1</label>
        <note>4Fe-4S-S-AdoMet</note>
    </ligand>
</feature>
<feature type="binding site" evidence="1">
    <location>
        <position position="60"/>
    </location>
    <ligand>
        <name>GTP</name>
        <dbReference type="ChEBI" id="CHEBI:37565"/>
    </ligand>
</feature>
<feature type="binding site" evidence="1">
    <location>
        <position position="64"/>
    </location>
    <ligand>
        <name>S-adenosyl-L-methionine</name>
        <dbReference type="ChEBI" id="CHEBI:59789"/>
    </ligand>
</feature>
<feature type="binding site" evidence="1">
    <location>
        <position position="90"/>
    </location>
    <ligand>
        <name>GTP</name>
        <dbReference type="ChEBI" id="CHEBI:37565"/>
    </ligand>
</feature>
<feature type="binding site" evidence="1">
    <location>
        <position position="114"/>
    </location>
    <ligand>
        <name>S-adenosyl-L-methionine</name>
        <dbReference type="ChEBI" id="CHEBI:59789"/>
    </ligand>
</feature>
<feature type="binding site" evidence="1">
    <location>
        <position position="151"/>
    </location>
    <ligand>
        <name>GTP</name>
        <dbReference type="ChEBI" id="CHEBI:37565"/>
    </ligand>
</feature>
<feature type="binding site" evidence="1">
    <location>
        <position position="245"/>
    </location>
    <ligand>
        <name>[4Fe-4S] cluster</name>
        <dbReference type="ChEBI" id="CHEBI:49883"/>
        <label>2</label>
        <note>4Fe-4S-substrate</note>
    </ligand>
</feature>
<feature type="binding site" evidence="1">
    <location>
        <position position="248"/>
    </location>
    <ligand>
        <name>[4Fe-4S] cluster</name>
        <dbReference type="ChEBI" id="CHEBI:49883"/>
        <label>2</label>
        <note>4Fe-4S-substrate</note>
    </ligand>
</feature>
<feature type="binding site" evidence="1">
    <location>
        <begin position="250"/>
        <end position="252"/>
    </location>
    <ligand>
        <name>GTP</name>
        <dbReference type="ChEBI" id="CHEBI:37565"/>
    </ligand>
</feature>
<feature type="binding site" evidence="1">
    <location>
        <position position="262"/>
    </location>
    <ligand>
        <name>[4Fe-4S] cluster</name>
        <dbReference type="ChEBI" id="CHEBI:49883"/>
        <label>2</label>
        <note>4Fe-4S-substrate</note>
    </ligand>
</feature>
<name>MOAA_SACI6</name>
<reference key="1">
    <citation type="journal article" date="2009" name="Proc. Natl. Acad. Sci. U.S.A.">
        <title>Biogeography of the Sulfolobus islandicus pan-genome.</title>
        <authorList>
            <person name="Reno M.L."/>
            <person name="Held N.L."/>
            <person name="Fields C.J."/>
            <person name="Burke P.V."/>
            <person name="Whitaker R.J."/>
        </authorList>
    </citation>
    <scope>NUCLEOTIDE SEQUENCE [LARGE SCALE GENOMIC DNA]</scope>
    <source>
        <strain>M.16.4 / Kamchatka #3</strain>
    </source>
</reference>
<keyword id="KW-0004">4Fe-4S</keyword>
<keyword id="KW-0342">GTP-binding</keyword>
<keyword id="KW-0408">Iron</keyword>
<keyword id="KW-0411">Iron-sulfur</keyword>
<keyword id="KW-0456">Lyase</keyword>
<keyword id="KW-0479">Metal-binding</keyword>
<keyword id="KW-0501">Molybdenum cofactor biosynthesis</keyword>
<keyword id="KW-0547">Nucleotide-binding</keyword>
<keyword id="KW-0949">S-adenosyl-L-methionine</keyword>
<evidence type="ECO:0000255" key="1">
    <source>
        <dbReference type="HAMAP-Rule" id="MF_01225"/>
    </source>
</evidence>
<evidence type="ECO:0000255" key="2">
    <source>
        <dbReference type="PROSITE-ProRule" id="PRU01266"/>
    </source>
</evidence>
<proteinExistence type="inferred from homology"/>
<protein>
    <recommendedName>
        <fullName evidence="1">Probable GTP 3',8-cyclase</fullName>
        <ecNumber evidence="1">4.1.99.22</ecNumber>
    </recommendedName>
    <alternativeName>
        <fullName evidence="1">Molybdenum cofactor biosynthesis protein A</fullName>
    </alternativeName>
</protein>
<organism>
    <name type="scientific">Saccharolobus islandicus (strain M.16.4 / Kamchatka #3)</name>
    <name type="common">Sulfolobus islandicus</name>
    <dbReference type="NCBI Taxonomy" id="426118"/>
    <lineage>
        <taxon>Archaea</taxon>
        <taxon>Thermoproteota</taxon>
        <taxon>Thermoprotei</taxon>
        <taxon>Sulfolobales</taxon>
        <taxon>Sulfolobaceae</taxon>
        <taxon>Saccharolobus</taxon>
    </lineage>
</organism>